<keyword id="KW-0963">Cytoplasm</keyword>
<keyword id="KW-0274">FAD</keyword>
<keyword id="KW-0285">Flavoprotein</keyword>
<keyword id="KW-0520">NAD</keyword>
<keyword id="KW-0521">NADP</keyword>
<keyword id="KW-0560">Oxidoreductase</keyword>
<proteinExistence type="inferred from homology"/>
<name>STHA_YERPB</name>
<evidence type="ECO:0000255" key="1">
    <source>
        <dbReference type="HAMAP-Rule" id="MF_00247"/>
    </source>
</evidence>
<sequence>MQQHFHFDAIVIGSGPGGEGAAMGLVKQGARVAVIERYNNVGGGCTHWGTIPSKALRHAVSRIIEFNQNPLYSDNARTIKSSFADILNHADRVINQQTRMRQGFYDRNHCHMFSGDASFIDANTVNVRYADGTSDTLQADNIVIATGSRPYRPVNVDFNHERIYDSDTILQLSHEPQHVIIYGAGVIGCEYASIFRGLSVKVDLINTRDRLLAFLDQEMSDALSYHFWNNGVVIRHNEEFEQIEGTTDGVIVHLKSGKKVKADCLLYANGRTGNTSGLGLENIGLEADSRGLLKVNSMYQTALSHVYAVGDVIGYPSLASAAYDQGRIAAQAMIKGEANVHLIEDIPTGIYTIPEISSVGKTEQELTAMKVPYEVGRAQFKHLARAQIVGMDTGSLKILFHRETKQILGIHCFGERAAEIIHIGQAIMEQKGEGNTLEYFVNTTFNYPTMAEAYRVAALNGLNRLF</sequence>
<dbReference type="EC" id="1.6.1.1" evidence="1"/>
<dbReference type="EMBL" id="CP001048">
    <property type="protein sequence ID" value="ACC87126.1"/>
    <property type="molecule type" value="Genomic_DNA"/>
</dbReference>
<dbReference type="RefSeq" id="WP_002209477.1">
    <property type="nucleotide sequence ID" value="NZ_CP009780.1"/>
</dbReference>
<dbReference type="SMR" id="B2JZF3"/>
<dbReference type="GeneID" id="96663600"/>
<dbReference type="KEGG" id="ypb:YPTS_0127"/>
<dbReference type="PATRIC" id="fig|502801.10.peg.3804"/>
<dbReference type="GO" id="GO:0005829">
    <property type="term" value="C:cytosol"/>
    <property type="evidence" value="ECO:0007669"/>
    <property type="project" value="TreeGrafter"/>
</dbReference>
<dbReference type="GO" id="GO:0004148">
    <property type="term" value="F:dihydrolipoyl dehydrogenase (NADH) activity"/>
    <property type="evidence" value="ECO:0007669"/>
    <property type="project" value="TreeGrafter"/>
</dbReference>
<dbReference type="GO" id="GO:0050660">
    <property type="term" value="F:flavin adenine dinucleotide binding"/>
    <property type="evidence" value="ECO:0007669"/>
    <property type="project" value="TreeGrafter"/>
</dbReference>
<dbReference type="GO" id="GO:0003957">
    <property type="term" value="F:NAD(P)+ transhydrogenase (Si-specific) activity"/>
    <property type="evidence" value="ECO:0007669"/>
    <property type="project" value="UniProtKB-UniRule"/>
</dbReference>
<dbReference type="GO" id="GO:0006103">
    <property type="term" value="P:2-oxoglutarate metabolic process"/>
    <property type="evidence" value="ECO:0007669"/>
    <property type="project" value="TreeGrafter"/>
</dbReference>
<dbReference type="GO" id="GO:0006739">
    <property type="term" value="P:NADP metabolic process"/>
    <property type="evidence" value="ECO:0007669"/>
    <property type="project" value="UniProtKB-UniRule"/>
</dbReference>
<dbReference type="FunFam" id="3.30.390.30:FF:000002">
    <property type="entry name" value="Soluble pyridine nucleotide transhydrogenase"/>
    <property type="match status" value="1"/>
</dbReference>
<dbReference type="FunFam" id="3.50.50.60:FF:000008">
    <property type="entry name" value="Soluble pyridine nucleotide transhydrogenase"/>
    <property type="match status" value="1"/>
</dbReference>
<dbReference type="Gene3D" id="3.30.390.30">
    <property type="match status" value="1"/>
</dbReference>
<dbReference type="Gene3D" id="3.50.50.60">
    <property type="entry name" value="FAD/NAD(P)-binding domain"/>
    <property type="match status" value="2"/>
</dbReference>
<dbReference type="HAMAP" id="MF_00247">
    <property type="entry name" value="SthA"/>
    <property type="match status" value="1"/>
</dbReference>
<dbReference type="InterPro" id="IPR050151">
    <property type="entry name" value="Class-I_Pyr_Nuc-Dis_Oxidored"/>
</dbReference>
<dbReference type="InterPro" id="IPR036188">
    <property type="entry name" value="FAD/NAD-bd_sf"/>
</dbReference>
<dbReference type="InterPro" id="IPR023753">
    <property type="entry name" value="FAD/NAD-binding_dom"/>
</dbReference>
<dbReference type="InterPro" id="IPR016156">
    <property type="entry name" value="FAD/NAD-linked_Rdtase_dimer_sf"/>
</dbReference>
<dbReference type="InterPro" id="IPR001100">
    <property type="entry name" value="Pyr_nuc-diS_OxRdtase"/>
</dbReference>
<dbReference type="InterPro" id="IPR004099">
    <property type="entry name" value="Pyr_nucl-diS_OxRdtase_dimer"/>
</dbReference>
<dbReference type="InterPro" id="IPR022962">
    <property type="entry name" value="STH_gammaproteobact"/>
</dbReference>
<dbReference type="NCBIfam" id="NF003585">
    <property type="entry name" value="PRK05249.1"/>
    <property type="match status" value="1"/>
</dbReference>
<dbReference type="PANTHER" id="PTHR22912">
    <property type="entry name" value="DISULFIDE OXIDOREDUCTASE"/>
    <property type="match status" value="1"/>
</dbReference>
<dbReference type="PANTHER" id="PTHR22912:SF93">
    <property type="entry name" value="SOLUBLE PYRIDINE NUCLEOTIDE TRANSHYDROGENASE"/>
    <property type="match status" value="1"/>
</dbReference>
<dbReference type="Pfam" id="PF07992">
    <property type="entry name" value="Pyr_redox_2"/>
    <property type="match status" value="1"/>
</dbReference>
<dbReference type="Pfam" id="PF02852">
    <property type="entry name" value="Pyr_redox_dim"/>
    <property type="match status" value="1"/>
</dbReference>
<dbReference type="PIRSF" id="PIRSF000350">
    <property type="entry name" value="Mercury_reductase_MerA"/>
    <property type="match status" value="1"/>
</dbReference>
<dbReference type="PRINTS" id="PR00368">
    <property type="entry name" value="FADPNR"/>
</dbReference>
<dbReference type="PRINTS" id="PR00411">
    <property type="entry name" value="PNDRDTASEI"/>
</dbReference>
<dbReference type="SUPFAM" id="SSF51905">
    <property type="entry name" value="FAD/NAD(P)-binding domain"/>
    <property type="match status" value="1"/>
</dbReference>
<dbReference type="SUPFAM" id="SSF55424">
    <property type="entry name" value="FAD/NAD-linked reductases, dimerisation (C-terminal) domain"/>
    <property type="match status" value="1"/>
</dbReference>
<accession>B2JZF3</accession>
<comment type="function">
    <text evidence="1">Conversion of NADPH, generated by peripheral catabolic pathways, to NADH, which can enter the respiratory chain for energy generation.</text>
</comment>
<comment type="catalytic activity">
    <reaction evidence="1">
        <text>NAD(+) + NADPH = NADH + NADP(+)</text>
        <dbReference type="Rhea" id="RHEA:11692"/>
        <dbReference type="ChEBI" id="CHEBI:57540"/>
        <dbReference type="ChEBI" id="CHEBI:57783"/>
        <dbReference type="ChEBI" id="CHEBI:57945"/>
        <dbReference type="ChEBI" id="CHEBI:58349"/>
        <dbReference type="EC" id="1.6.1.1"/>
    </reaction>
</comment>
<comment type="cofactor">
    <cofactor evidence="1">
        <name>FAD</name>
        <dbReference type="ChEBI" id="CHEBI:57692"/>
    </cofactor>
    <text evidence="1">Binds 1 FAD per subunit.</text>
</comment>
<comment type="subcellular location">
    <subcellularLocation>
        <location evidence="1">Cytoplasm</location>
    </subcellularLocation>
</comment>
<comment type="similarity">
    <text evidence="1">Belongs to the class-I pyridine nucleotide-disulfide oxidoreductase family.</text>
</comment>
<reference key="1">
    <citation type="submission" date="2008-04" db="EMBL/GenBank/DDBJ databases">
        <title>Complete sequence of Yersinia pseudotuberculosis PB1/+.</title>
        <authorList>
            <person name="Copeland A."/>
            <person name="Lucas S."/>
            <person name="Lapidus A."/>
            <person name="Glavina del Rio T."/>
            <person name="Dalin E."/>
            <person name="Tice H."/>
            <person name="Bruce D."/>
            <person name="Goodwin L."/>
            <person name="Pitluck S."/>
            <person name="Munk A.C."/>
            <person name="Brettin T."/>
            <person name="Detter J.C."/>
            <person name="Han C."/>
            <person name="Tapia R."/>
            <person name="Schmutz J."/>
            <person name="Larimer F."/>
            <person name="Land M."/>
            <person name="Hauser L."/>
            <person name="Challacombe J.F."/>
            <person name="Green L."/>
            <person name="Lindler L.E."/>
            <person name="Nikolich M.P."/>
            <person name="Richardson P."/>
        </authorList>
    </citation>
    <scope>NUCLEOTIDE SEQUENCE [LARGE SCALE GENOMIC DNA]</scope>
    <source>
        <strain>PB1/+</strain>
    </source>
</reference>
<feature type="chain" id="PRO_1000100863" description="Soluble pyridine nucleotide transhydrogenase">
    <location>
        <begin position="1"/>
        <end position="466"/>
    </location>
</feature>
<feature type="binding site" evidence="1">
    <location>
        <begin position="36"/>
        <end position="45"/>
    </location>
    <ligand>
        <name>FAD</name>
        <dbReference type="ChEBI" id="CHEBI:57692"/>
    </ligand>
</feature>
<gene>
    <name evidence="1" type="primary">sthA</name>
    <name evidence="1" type="synonym">udhA</name>
    <name type="ordered locus">YPTS_0127</name>
</gene>
<protein>
    <recommendedName>
        <fullName evidence="1">Soluble pyridine nucleotide transhydrogenase</fullName>
        <shortName evidence="1">STH</shortName>
        <ecNumber evidence="1">1.6.1.1</ecNumber>
    </recommendedName>
    <alternativeName>
        <fullName evidence="1">NAD(P)(+) transhydrogenase [B-specific]</fullName>
    </alternativeName>
</protein>
<organism>
    <name type="scientific">Yersinia pseudotuberculosis serotype IB (strain PB1/+)</name>
    <dbReference type="NCBI Taxonomy" id="502801"/>
    <lineage>
        <taxon>Bacteria</taxon>
        <taxon>Pseudomonadati</taxon>
        <taxon>Pseudomonadota</taxon>
        <taxon>Gammaproteobacteria</taxon>
        <taxon>Enterobacterales</taxon>
        <taxon>Yersiniaceae</taxon>
        <taxon>Yersinia</taxon>
    </lineage>
</organism>